<evidence type="ECO:0000250" key="1">
    <source>
        <dbReference type="UniProtKB" id="P50076"/>
    </source>
</evidence>
<evidence type="ECO:0000255" key="2"/>
<evidence type="ECO:0000305" key="3"/>
<feature type="chain" id="PRO_0000215454" description="Dol-P-Glc:Glc(2)Man(9)GlcNAc(2)-PP-Dol alpha-1,2-glucosyltransferase">
    <location>
        <begin position="1"/>
        <end position="461"/>
    </location>
</feature>
<feature type="transmembrane region" description="Helical" evidence="2">
    <location>
        <begin position="6"/>
        <end position="26"/>
    </location>
</feature>
<feature type="transmembrane region" description="Helical" evidence="2">
    <location>
        <begin position="92"/>
        <end position="112"/>
    </location>
</feature>
<feature type="transmembrane region" description="Helical" evidence="2">
    <location>
        <begin position="119"/>
        <end position="137"/>
    </location>
</feature>
<feature type="transmembrane region" description="Helical" evidence="2">
    <location>
        <begin position="138"/>
        <end position="156"/>
    </location>
</feature>
<feature type="transmembrane region" description="Helical" evidence="2">
    <location>
        <begin position="159"/>
        <end position="179"/>
    </location>
</feature>
<feature type="transmembrane region" description="Helical" evidence="2">
    <location>
        <begin position="220"/>
        <end position="240"/>
    </location>
</feature>
<feature type="transmembrane region" description="Helical" evidence="2">
    <location>
        <begin position="260"/>
        <end position="280"/>
    </location>
</feature>
<feature type="transmembrane region" description="Helical" evidence="2">
    <location>
        <begin position="290"/>
        <end position="310"/>
    </location>
</feature>
<feature type="transmembrane region" description="Helical" evidence="2">
    <location>
        <begin position="344"/>
        <end position="364"/>
    </location>
</feature>
<feature type="transmembrane region" description="Helical" evidence="2">
    <location>
        <begin position="368"/>
        <end position="388"/>
    </location>
</feature>
<feature type="transmembrane region" description="Helical" evidence="2">
    <location>
        <begin position="425"/>
        <end position="445"/>
    </location>
</feature>
<feature type="glycosylation site" description="N-linked (GlcNAc...) asparagine" evidence="2">
    <location>
        <position position="316"/>
    </location>
</feature>
<accession>Q6BW42</accession>
<dbReference type="EC" id="2.4.1.256" evidence="1"/>
<dbReference type="EMBL" id="CR382134">
    <property type="protein sequence ID" value="CAG85588.1"/>
    <property type="molecule type" value="Genomic_DNA"/>
</dbReference>
<dbReference type="RefSeq" id="XP_457577.1">
    <property type="nucleotide sequence ID" value="XM_457577.1"/>
</dbReference>
<dbReference type="FunCoup" id="Q6BW42">
    <property type="interactions" value="699"/>
</dbReference>
<dbReference type="STRING" id="284592.Q6BW42"/>
<dbReference type="CAZy" id="GT59">
    <property type="family name" value="Glycosyltransferase Family 59"/>
</dbReference>
<dbReference type="GlyCosmos" id="Q6BW42">
    <property type="glycosylation" value="1 site, No reported glycans"/>
</dbReference>
<dbReference type="GeneID" id="2913540"/>
<dbReference type="KEGG" id="dha:DEHA2B14520g"/>
<dbReference type="VEuPathDB" id="FungiDB:DEHA2B14520g"/>
<dbReference type="eggNOG" id="KOG2642">
    <property type="taxonomic scope" value="Eukaryota"/>
</dbReference>
<dbReference type="HOGENOM" id="CLU_017053_1_0_1"/>
<dbReference type="InParanoid" id="Q6BW42"/>
<dbReference type="OMA" id="VWDSKIT"/>
<dbReference type="OrthoDB" id="4769at2759"/>
<dbReference type="UniPathway" id="UPA00378"/>
<dbReference type="Proteomes" id="UP000000599">
    <property type="component" value="Chromosome B"/>
</dbReference>
<dbReference type="GO" id="GO:0005789">
    <property type="term" value="C:endoplasmic reticulum membrane"/>
    <property type="evidence" value="ECO:0007669"/>
    <property type="project" value="UniProtKB-SubCell"/>
</dbReference>
<dbReference type="GO" id="GO:0106073">
    <property type="term" value="F:dolichyl pyrophosphate Glc2Man9GlcNAc2 alpha-1,2-glucosyltransferase activity"/>
    <property type="evidence" value="ECO:0007669"/>
    <property type="project" value="UniProtKB-EC"/>
</dbReference>
<dbReference type="GO" id="GO:0006488">
    <property type="term" value="P:dolichol-linked oligosaccharide biosynthetic process"/>
    <property type="evidence" value="ECO:0007669"/>
    <property type="project" value="EnsemblFungi"/>
</dbReference>
<dbReference type="InterPro" id="IPR016900">
    <property type="entry name" value="Alg10"/>
</dbReference>
<dbReference type="PANTHER" id="PTHR12989">
    <property type="entry name" value="ALPHA-1,2-GLUCOSYLTRANSFERASE ALG10"/>
    <property type="match status" value="1"/>
</dbReference>
<dbReference type="PANTHER" id="PTHR12989:SF10">
    <property type="entry name" value="DOL-P-GLC:GLC(2)MAN(9)GLCNAC(2)-PP-DOL ALPHA-1,2-GLUCOSYLTRANSFERASE-RELATED"/>
    <property type="match status" value="1"/>
</dbReference>
<dbReference type="Pfam" id="PF04922">
    <property type="entry name" value="DIE2_ALG10"/>
    <property type="match status" value="1"/>
</dbReference>
<dbReference type="PIRSF" id="PIRSF028810">
    <property type="entry name" value="Alpha1_2_glucosyltferase_Alg10"/>
    <property type="match status" value="1"/>
</dbReference>
<reference key="1">
    <citation type="journal article" date="2004" name="Nature">
        <title>Genome evolution in yeasts.</title>
        <authorList>
            <person name="Dujon B."/>
            <person name="Sherman D."/>
            <person name="Fischer G."/>
            <person name="Durrens P."/>
            <person name="Casaregola S."/>
            <person name="Lafontaine I."/>
            <person name="de Montigny J."/>
            <person name="Marck C."/>
            <person name="Neuveglise C."/>
            <person name="Talla E."/>
            <person name="Goffard N."/>
            <person name="Frangeul L."/>
            <person name="Aigle M."/>
            <person name="Anthouard V."/>
            <person name="Babour A."/>
            <person name="Barbe V."/>
            <person name="Barnay S."/>
            <person name="Blanchin S."/>
            <person name="Beckerich J.-M."/>
            <person name="Beyne E."/>
            <person name="Bleykasten C."/>
            <person name="Boisrame A."/>
            <person name="Boyer J."/>
            <person name="Cattolico L."/>
            <person name="Confanioleri F."/>
            <person name="de Daruvar A."/>
            <person name="Despons L."/>
            <person name="Fabre E."/>
            <person name="Fairhead C."/>
            <person name="Ferry-Dumazet H."/>
            <person name="Groppi A."/>
            <person name="Hantraye F."/>
            <person name="Hennequin C."/>
            <person name="Jauniaux N."/>
            <person name="Joyet P."/>
            <person name="Kachouri R."/>
            <person name="Kerrest A."/>
            <person name="Koszul R."/>
            <person name="Lemaire M."/>
            <person name="Lesur I."/>
            <person name="Ma L."/>
            <person name="Muller H."/>
            <person name="Nicaud J.-M."/>
            <person name="Nikolski M."/>
            <person name="Oztas S."/>
            <person name="Ozier-Kalogeropoulos O."/>
            <person name="Pellenz S."/>
            <person name="Potier S."/>
            <person name="Richard G.-F."/>
            <person name="Straub M.-L."/>
            <person name="Suleau A."/>
            <person name="Swennen D."/>
            <person name="Tekaia F."/>
            <person name="Wesolowski-Louvel M."/>
            <person name="Westhof E."/>
            <person name="Wirth B."/>
            <person name="Zeniou-Meyer M."/>
            <person name="Zivanovic Y."/>
            <person name="Bolotin-Fukuhara M."/>
            <person name="Thierry A."/>
            <person name="Bouchier C."/>
            <person name="Caudron B."/>
            <person name="Scarpelli C."/>
            <person name="Gaillardin C."/>
            <person name="Weissenbach J."/>
            <person name="Wincker P."/>
            <person name="Souciet J.-L."/>
        </authorList>
    </citation>
    <scope>NUCLEOTIDE SEQUENCE [LARGE SCALE GENOMIC DNA]</scope>
    <source>
        <strain>ATCC 36239 / CBS 767 / BCRC 21394 / JCM 1990 / NBRC 0083 / IGC 2968</strain>
    </source>
</reference>
<protein>
    <recommendedName>
        <fullName evidence="1">Dol-P-Glc:Glc(2)Man(9)GlcNAc(2)-PP-Dol alpha-1,2-glucosyltransferase</fullName>
        <ecNumber evidence="1">2.4.1.256</ecNumber>
    </recommendedName>
    <alternativeName>
        <fullName>Alpha-1,2-glucosyltransferase ALG10-A</fullName>
    </alternativeName>
    <alternativeName>
        <fullName>Alpha-2-glucosyltransferase ALG10</fullName>
    </alternativeName>
    <alternativeName>
        <fullName>Asparagine-linked glycosylation protein 10</fullName>
    </alternativeName>
    <alternativeName>
        <fullName>Dolichyl-phosphoglucose-dependent glucosyltransferase ALG10</fullName>
    </alternativeName>
</protein>
<gene>
    <name type="primary">ALG10</name>
    <name type="ordered locus">DEHA2B14520g</name>
</gene>
<keyword id="KW-0256">Endoplasmic reticulum</keyword>
<keyword id="KW-0325">Glycoprotein</keyword>
<keyword id="KW-0328">Glycosyltransferase</keyword>
<keyword id="KW-0472">Membrane</keyword>
<keyword id="KW-1185">Reference proteome</keyword>
<keyword id="KW-0808">Transferase</keyword>
<keyword id="KW-0812">Transmembrane</keyword>
<keyword id="KW-1133">Transmembrane helix</keyword>
<comment type="function">
    <text evidence="1">Dol-P-Glc:Glc(2)Man(9)GlcNAc(2)-PP-Dol alpha-1,2-glucosyltransferase that operates in the biosynthetic pathway of dolichol-linked oligosaccharides, the glycan precursors employed in protein asparagine (N)-glycosylation. The assembly of dolichol-linked oligosaccharides begins on the cytosolic side of the endoplasmic reticulum membrane and finishes in its lumen. The sequential addition of sugars to dolichol pyrophosphate produces dolichol-linked oligosaccharides containing fourteen sugars, including two GlcNAcs, nine mannoses and three glucoses. Once assembled, the oligosaccharide is transferred from the lipid to nascent proteins by oligosaccharyltransferases. In the lumen of the endoplasmic reticulum, adds the third and last glucose residue from dolichyl phosphate glucose (Dol-P-Glc) onto the lipid-linked oligosaccharide intermediate Glc(2)Man(9)GlcNAc(2)-PP-Dol to produce Glc(3)Man(9)GlcNAc(2)-PP-Dol.</text>
</comment>
<comment type="catalytic activity">
    <reaction evidence="1">
        <text>an alpha-D-Glc-(1-&gt;3)-alpha-D-Glc-(1-&gt;3)-alpha-D-Man-(1-&gt;2)-alpha-D-Man-(1-&gt;2)-alpha-D-Man-(1-&gt;3)-[alpha-D-Man-(1-&gt;2)-alpha-D-Man-(1-&gt;3)-[alpha-D-Man-(1-&gt;2)-alpha-D-Man-(1-&gt;6)]-alpha-D-Man-(1-&gt;6)]-beta-D-Man-(1-&gt;4)-beta-D-GlcNAc-(1-&gt;4)-alpha-D-GlcNAc-diphospho-di-trans,poly-cis-dolichol + a di-trans,poly-cis-dolichyl beta-D-glucosyl phosphate = a alpha-D-Glc-(1-&gt;2)-alpha-D-Glc-(1-&gt;3)-alpha-D-Glc-(1-&gt;3)-alpha-D-Man-(1-&gt;2)-alpha-D-Man-(1-&gt;2)-alpha-D-Man-(1-&gt;3)-[alpha-D-Man-(1-&gt;2)-alpha-D-Man-(1-&gt;3)-[alpha-D-Man-(1-&gt;2)-alpha-D-Man-(1-&gt;6)]-alpha-D-Man-(1-&gt;6)]-beta-D-Man-(1-&gt;4)-beta-D-GlcNAc-(1-&gt;4)-alpha-D-GlcNAc-diphospho-di-trans,poly-cis-dolichol + a di-trans,poly-cis-dolichyl phosphate + H(+)</text>
        <dbReference type="Rhea" id="RHEA:29543"/>
        <dbReference type="Rhea" id="RHEA-COMP:19498"/>
        <dbReference type="Rhea" id="RHEA-COMP:19502"/>
        <dbReference type="Rhea" id="RHEA-COMP:19512"/>
        <dbReference type="Rhea" id="RHEA-COMP:19522"/>
        <dbReference type="ChEBI" id="CHEBI:15378"/>
        <dbReference type="ChEBI" id="CHEBI:57525"/>
        <dbReference type="ChEBI" id="CHEBI:57683"/>
        <dbReference type="ChEBI" id="CHEBI:132522"/>
        <dbReference type="ChEBI" id="CHEBI:132523"/>
        <dbReference type="EC" id="2.4.1.256"/>
    </reaction>
    <physiologicalReaction direction="left-to-right" evidence="1">
        <dbReference type="Rhea" id="RHEA:29544"/>
    </physiologicalReaction>
</comment>
<comment type="pathway">
    <text evidence="1">Protein modification; protein glycosylation.</text>
</comment>
<comment type="subcellular location">
    <subcellularLocation>
        <location evidence="1">Endoplasmic reticulum membrane</location>
        <topology evidence="2">Multi-pass membrane protein</topology>
    </subcellularLocation>
</comment>
<comment type="similarity">
    <text evidence="3">Belongs to the ALG10 glucosyltransferase family.</text>
</comment>
<proteinExistence type="inferred from homology"/>
<sequence length="461" mass="53911">MWNVQVVLTSIFVIFCGIVFRLVALNVKDPFIDEIFHLRQCQTYCALRFDIWDHKITTPPGLYILGMVYAEVVKRITFTSESLVSVCENMNVLRSANLFGGLVVLPLIVQGLVEKEKPQFWTVNIVAMPLLFTYYFLFYTDIWASILIVASLALVVRQPLGLITSSYISGIIAFASLWFRQTNIIWIAFIASLLVDKRRREHHNDMGFVQNGINFIRQAVKDWVAVLPFISNIILFAIFVKYNEGITFGDKENHKLNLHIVQVFYCFTFMSMFTWPVWLSIRLIKRYIHFTILGNYGLNTIFTIGSGILIKFIIDNYTVVHPFLLADNRHYTFYIWKRILNREYSNIFMIPIYHFCTWNIIDSLSHNIGGLTPITIITFIGGIFITIIPSPLFEPRYYIVPLLIYRLYVRPTKEKVFGISISRHALEFFWFMMVDVAITVIFLCYEFTWFSEPGKIQRIVW</sequence>
<organism>
    <name type="scientific">Debaryomyces hansenii (strain ATCC 36239 / CBS 767 / BCRC 21394 / JCM 1990 / NBRC 0083 / IGC 2968)</name>
    <name type="common">Yeast</name>
    <name type="synonym">Torulaspora hansenii</name>
    <dbReference type="NCBI Taxonomy" id="284592"/>
    <lineage>
        <taxon>Eukaryota</taxon>
        <taxon>Fungi</taxon>
        <taxon>Dikarya</taxon>
        <taxon>Ascomycota</taxon>
        <taxon>Saccharomycotina</taxon>
        <taxon>Pichiomycetes</taxon>
        <taxon>Debaryomycetaceae</taxon>
        <taxon>Debaryomyces</taxon>
    </lineage>
</organism>
<name>ALG10_DEBHA</name>